<reference key="1">
    <citation type="journal article" date="2009" name="Environ. Microbiol.">
        <title>Genome sequence of Desulfobacterium autotrophicum HRM2, a marine sulfate reducer oxidizing organic carbon completely to carbon dioxide.</title>
        <authorList>
            <person name="Strittmatter A.W."/>
            <person name="Liesegang H."/>
            <person name="Rabus R."/>
            <person name="Decker I."/>
            <person name="Amann J."/>
            <person name="Andres S."/>
            <person name="Henne A."/>
            <person name="Fricke W.F."/>
            <person name="Martinez-Arias R."/>
            <person name="Bartels D."/>
            <person name="Goesmann A."/>
            <person name="Krause L."/>
            <person name="Puehler A."/>
            <person name="Klenk H.P."/>
            <person name="Richter M."/>
            <person name="Schuler M."/>
            <person name="Gloeckner F.O."/>
            <person name="Meyerdierks A."/>
            <person name="Gottschalk G."/>
            <person name="Amann R."/>
        </authorList>
    </citation>
    <scope>NUCLEOTIDE SEQUENCE [LARGE SCALE GENOMIC DNA]</scope>
    <source>
        <strain>ATCC 43914 / DSM 3382 / VKM B-1955 / HRM2</strain>
    </source>
</reference>
<comment type="catalytic activity">
    <reaction evidence="1">
        <text>(2R)-3-phosphoglycerate + ATP = (2R)-3-phospho-glyceroyl phosphate + ADP</text>
        <dbReference type="Rhea" id="RHEA:14801"/>
        <dbReference type="ChEBI" id="CHEBI:30616"/>
        <dbReference type="ChEBI" id="CHEBI:57604"/>
        <dbReference type="ChEBI" id="CHEBI:58272"/>
        <dbReference type="ChEBI" id="CHEBI:456216"/>
        <dbReference type="EC" id="2.7.2.3"/>
    </reaction>
</comment>
<comment type="pathway">
    <text evidence="1">Carbohydrate degradation; glycolysis; pyruvate from D-glyceraldehyde 3-phosphate: step 2/5.</text>
</comment>
<comment type="subunit">
    <text evidence="1">Monomer.</text>
</comment>
<comment type="subcellular location">
    <subcellularLocation>
        <location evidence="1">Cytoplasm</location>
    </subcellularLocation>
</comment>
<comment type="similarity">
    <text evidence="1">Belongs to the phosphoglycerate kinase family.</text>
</comment>
<proteinExistence type="inferred from homology"/>
<accession>C0Q9Z7</accession>
<organism>
    <name type="scientific">Desulforapulum autotrophicum (strain ATCC 43914 / DSM 3382 / VKM B-1955 / HRM2)</name>
    <name type="common">Desulfobacterium autotrophicum</name>
    <dbReference type="NCBI Taxonomy" id="177437"/>
    <lineage>
        <taxon>Bacteria</taxon>
        <taxon>Pseudomonadati</taxon>
        <taxon>Thermodesulfobacteriota</taxon>
        <taxon>Desulfobacteria</taxon>
        <taxon>Desulfobacterales</taxon>
        <taxon>Desulfobacteraceae</taxon>
        <taxon>Desulforapulum</taxon>
    </lineage>
</organism>
<name>PGK_DESAH</name>
<dbReference type="EC" id="2.7.2.3" evidence="1"/>
<dbReference type="EMBL" id="CP001087">
    <property type="protein sequence ID" value="ACN16715.1"/>
    <property type="molecule type" value="Genomic_DNA"/>
</dbReference>
<dbReference type="RefSeq" id="WP_015905464.1">
    <property type="nucleotide sequence ID" value="NC_012108.1"/>
</dbReference>
<dbReference type="SMR" id="C0Q9Z7"/>
<dbReference type="STRING" id="177437.HRM2_36560"/>
<dbReference type="KEGG" id="dat:HRM2_36560"/>
<dbReference type="eggNOG" id="COG0126">
    <property type="taxonomic scope" value="Bacteria"/>
</dbReference>
<dbReference type="HOGENOM" id="CLU_025427_0_2_7"/>
<dbReference type="OrthoDB" id="9808460at2"/>
<dbReference type="UniPathway" id="UPA00109">
    <property type="reaction ID" value="UER00185"/>
</dbReference>
<dbReference type="Proteomes" id="UP000000442">
    <property type="component" value="Chromosome"/>
</dbReference>
<dbReference type="GO" id="GO:0005829">
    <property type="term" value="C:cytosol"/>
    <property type="evidence" value="ECO:0007669"/>
    <property type="project" value="TreeGrafter"/>
</dbReference>
<dbReference type="GO" id="GO:0043531">
    <property type="term" value="F:ADP binding"/>
    <property type="evidence" value="ECO:0007669"/>
    <property type="project" value="TreeGrafter"/>
</dbReference>
<dbReference type="GO" id="GO:0005524">
    <property type="term" value="F:ATP binding"/>
    <property type="evidence" value="ECO:0007669"/>
    <property type="project" value="UniProtKB-KW"/>
</dbReference>
<dbReference type="GO" id="GO:0004618">
    <property type="term" value="F:phosphoglycerate kinase activity"/>
    <property type="evidence" value="ECO:0007669"/>
    <property type="project" value="UniProtKB-UniRule"/>
</dbReference>
<dbReference type="GO" id="GO:0006094">
    <property type="term" value="P:gluconeogenesis"/>
    <property type="evidence" value="ECO:0007669"/>
    <property type="project" value="TreeGrafter"/>
</dbReference>
<dbReference type="GO" id="GO:0006096">
    <property type="term" value="P:glycolytic process"/>
    <property type="evidence" value="ECO:0007669"/>
    <property type="project" value="UniProtKB-UniRule"/>
</dbReference>
<dbReference type="FunFam" id="3.40.50.1260:FF:000003">
    <property type="entry name" value="Phosphoglycerate kinase"/>
    <property type="match status" value="1"/>
</dbReference>
<dbReference type="FunFam" id="3.40.50.1260:FF:000006">
    <property type="entry name" value="Phosphoglycerate kinase"/>
    <property type="match status" value="1"/>
</dbReference>
<dbReference type="Gene3D" id="3.40.50.1260">
    <property type="entry name" value="Phosphoglycerate kinase, N-terminal domain"/>
    <property type="match status" value="2"/>
</dbReference>
<dbReference type="HAMAP" id="MF_00145">
    <property type="entry name" value="Phosphoglyc_kinase"/>
    <property type="match status" value="1"/>
</dbReference>
<dbReference type="InterPro" id="IPR001576">
    <property type="entry name" value="Phosphoglycerate_kinase"/>
</dbReference>
<dbReference type="InterPro" id="IPR015824">
    <property type="entry name" value="Phosphoglycerate_kinase_N"/>
</dbReference>
<dbReference type="InterPro" id="IPR036043">
    <property type="entry name" value="Phosphoglycerate_kinase_sf"/>
</dbReference>
<dbReference type="PANTHER" id="PTHR11406">
    <property type="entry name" value="PHOSPHOGLYCERATE KINASE"/>
    <property type="match status" value="1"/>
</dbReference>
<dbReference type="PANTHER" id="PTHR11406:SF23">
    <property type="entry name" value="PHOSPHOGLYCERATE KINASE 1, CHLOROPLASTIC-RELATED"/>
    <property type="match status" value="1"/>
</dbReference>
<dbReference type="Pfam" id="PF00162">
    <property type="entry name" value="PGK"/>
    <property type="match status" value="1"/>
</dbReference>
<dbReference type="PIRSF" id="PIRSF000724">
    <property type="entry name" value="Pgk"/>
    <property type="match status" value="1"/>
</dbReference>
<dbReference type="PRINTS" id="PR00477">
    <property type="entry name" value="PHGLYCKINASE"/>
</dbReference>
<dbReference type="SUPFAM" id="SSF53748">
    <property type="entry name" value="Phosphoglycerate kinase"/>
    <property type="match status" value="1"/>
</dbReference>
<evidence type="ECO:0000255" key="1">
    <source>
        <dbReference type="HAMAP-Rule" id="MF_00145"/>
    </source>
</evidence>
<feature type="chain" id="PRO_1000203333" description="Phosphoglycerate kinase">
    <location>
        <begin position="1"/>
        <end position="391"/>
    </location>
</feature>
<feature type="binding site" evidence="1">
    <location>
        <begin position="19"/>
        <end position="21"/>
    </location>
    <ligand>
        <name>substrate</name>
    </ligand>
</feature>
<feature type="binding site" evidence="1">
    <location>
        <position position="35"/>
    </location>
    <ligand>
        <name>substrate</name>
    </ligand>
</feature>
<feature type="binding site" evidence="1">
    <location>
        <begin position="58"/>
        <end position="61"/>
    </location>
    <ligand>
        <name>substrate</name>
    </ligand>
</feature>
<feature type="binding site" evidence="1">
    <location>
        <position position="117"/>
    </location>
    <ligand>
        <name>substrate</name>
    </ligand>
</feature>
<feature type="binding site" evidence="1">
    <location>
        <position position="150"/>
    </location>
    <ligand>
        <name>substrate</name>
    </ligand>
</feature>
<feature type="binding site" evidence="1">
    <location>
        <position position="201"/>
    </location>
    <ligand>
        <name>ATP</name>
        <dbReference type="ChEBI" id="CHEBI:30616"/>
    </ligand>
</feature>
<feature type="binding site" evidence="1">
    <location>
        <position position="323"/>
    </location>
    <ligand>
        <name>ATP</name>
        <dbReference type="ChEBI" id="CHEBI:30616"/>
    </ligand>
</feature>
<feature type="binding site" evidence="1">
    <location>
        <begin position="349"/>
        <end position="352"/>
    </location>
    <ligand>
        <name>ATP</name>
        <dbReference type="ChEBI" id="CHEBI:30616"/>
    </ligand>
</feature>
<keyword id="KW-0067">ATP-binding</keyword>
<keyword id="KW-0963">Cytoplasm</keyword>
<keyword id="KW-0324">Glycolysis</keyword>
<keyword id="KW-0418">Kinase</keyword>
<keyword id="KW-0547">Nucleotide-binding</keyword>
<keyword id="KW-1185">Reference proteome</keyword>
<keyword id="KW-0808">Transferase</keyword>
<sequence length="391" mass="41899">MKTVREIEFNSKTVLVRVDYNLPMDENGNIADDNRIRATLPLVNYLVDKGAKIVLASHMGRPKGKPAASLSLAPAAKRLSELLGFEVVFVDDCIGPKVKERVDQLEPGQIILLENLRFYKGEEENDPEFARSLAELCQVYVNDAFAVSHRTAASIVAITRFVREACAGFLLEKEVKCFHDSIENPVHPLVAIIGGAKVSSKLGALENMLNHVDALVIGGAMANTFLKSQGNDVGASMVEEDLVETAAHIVQEARDRKINLILPVDLVVADRFDADAQTRVVDVKAVPQGWMALDIGPETGAIFARAIQRAATIVWNGPMGVFEMKPFCNGTKMVAAAVAAADAFSVVGGGDTGLAVNLCGVADKMSYVSTGGGAFLHLMEGKKLPGVTALD</sequence>
<gene>
    <name evidence="1" type="primary">pgk</name>
    <name type="ordered locus">HRM2_36560</name>
</gene>
<protein>
    <recommendedName>
        <fullName evidence="1">Phosphoglycerate kinase</fullName>
        <ecNumber evidence="1">2.7.2.3</ecNumber>
    </recommendedName>
</protein>